<dbReference type="EC" id="2.8.3.-" evidence="2 5"/>
<dbReference type="EMBL" id="CP000448">
    <property type="protein sequence ID" value="ABI69229.1"/>
    <property type="molecule type" value="Genomic_DNA"/>
</dbReference>
<dbReference type="RefSeq" id="WP_011641322.1">
    <property type="nucleotide sequence ID" value="NC_008346.1"/>
</dbReference>
<dbReference type="SMR" id="Q0AVM5"/>
<dbReference type="STRING" id="335541.Swol_1932"/>
<dbReference type="KEGG" id="swo:Swol_1932"/>
<dbReference type="eggNOG" id="COG0427">
    <property type="taxonomic scope" value="Bacteria"/>
</dbReference>
<dbReference type="HOGENOM" id="CLU_030703_1_0_9"/>
<dbReference type="OrthoDB" id="9801795at2"/>
<dbReference type="UniPathway" id="UPA00863"/>
<dbReference type="Proteomes" id="UP000001968">
    <property type="component" value="Chromosome"/>
</dbReference>
<dbReference type="GO" id="GO:0005737">
    <property type="term" value="C:cytoplasm"/>
    <property type="evidence" value="ECO:0007669"/>
    <property type="project" value="UniProtKB-SubCell"/>
</dbReference>
<dbReference type="GO" id="GO:0008775">
    <property type="term" value="F:acetate CoA-transferase activity"/>
    <property type="evidence" value="ECO:0007669"/>
    <property type="project" value="InterPro"/>
</dbReference>
<dbReference type="GO" id="GO:0006083">
    <property type="term" value="P:acetate metabolic process"/>
    <property type="evidence" value="ECO:0007669"/>
    <property type="project" value="InterPro"/>
</dbReference>
<dbReference type="GO" id="GO:0006084">
    <property type="term" value="P:acetyl-CoA metabolic process"/>
    <property type="evidence" value="ECO:0007669"/>
    <property type="project" value="UniProtKB-UniRule"/>
</dbReference>
<dbReference type="GO" id="GO:0019605">
    <property type="term" value="P:butyrate metabolic process"/>
    <property type="evidence" value="ECO:0007669"/>
    <property type="project" value="UniProtKB-UniRule"/>
</dbReference>
<dbReference type="Gene3D" id="3.30.750.70">
    <property type="entry name" value="4-hydroxybutyrate coenzyme like domains"/>
    <property type="match status" value="1"/>
</dbReference>
<dbReference type="Gene3D" id="3.40.1080.20">
    <property type="entry name" value="Acetyl-CoA hydrolase/transferase C-terminal domain"/>
    <property type="match status" value="1"/>
</dbReference>
<dbReference type="Gene3D" id="3.40.1080.10">
    <property type="entry name" value="Glutaconate Coenzyme A-transferase"/>
    <property type="match status" value="1"/>
</dbReference>
<dbReference type="HAMAP" id="MF_03228">
    <property type="entry name" value="But_CoA_trans"/>
    <property type="match status" value="1"/>
</dbReference>
<dbReference type="InterPro" id="IPR026888">
    <property type="entry name" value="AcetylCoA_hyd_C"/>
</dbReference>
<dbReference type="InterPro" id="IPR038460">
    <property type="entry name" value="AcetylCoA_hyd_C_sf"/>
</dbReference>
<dbReference type="InterPro" id="IPR046433">
    <property type="entry name" value="ActCoA_hydro"/>
</dbReference>
<dbReference type="InterPro" id="IPR003702">
    <property type="entry name" value="ActCoA_hydro_N"/>
</dbReference>
<dbReference type="InterPro" id="IPR023990">
    <property type="entry name" value="Butryl-CoA_acetate_CoA_Tfrase"/>
</dbReference>
<dbReference type="InterPro" id="IPR037171">
    <property type="entry name" value="NagB/RpiA_transferase-like"/>
</dbReference>
<dbReference type="PANTHER" id="PTHR21432:SF20">
    <property type="entry name" value="ACETYL-COA HYDROLASE"/>
    <property type="match status" value="1"/>
</dbReference>
<dbReference type="PANTHER" id="PTHR21432">
    <property type="entry name" value="ACETYL-COA HYDROLASE-RELATED"/>
    <property type="match status" value="1"/>
</dbReference>
<dbReference type="Pfam" id="PF13336">
    <property type="entry name" value="AcetylCoA_hyd_C"/>
    <property type="match status" value="1"/>
</dbReference>
<dbReference type="Pfam" id="PF02550">
    <property type="entry name" value="AcetylCoA_hydro"/>
    <property type="match status" value="1"/>
</dbReference>
<dbReference type="SUPFAM" id="SSF100950">
    <property type="entry name" value="NagB/RpiA/CoA transferase-like"/>
    <property type="match status" value="2"/>
</dbReference>
<proteinExistence type="evidence at protein level"/>
<sequence>MYQKLLEEYKSKLVTADEAAKQVKSGDWVEYGFGINCARDFDEALAKRKDELEDVKIRCDIGAYQHFTAEVDPDNKHFTWNSWHVAGHDRKFINKNLFYIPMKFHENPMMTRKDCVPTNVAVIQCTAMDKHGYFNFGGSSVNCCAMMETARVTILEVNEKMPRCLGGNQECLHISQVDYIIQSKNEPIATIGSAEPSPVEIAMAQHIIERLYDGNCIQLGIGGTPNAVGSMVAASDLKDLGVHTEMYVDAYLLMAKAGKITGARKSIDKYKQVYSFAMGSQELYDYIDDNPGLASYSVDYTNNPWVVAQIDDFVSINACIEVDLYGQVCAESVGTRHISGTGGQLDFVEGAYKSKNGQSFICLPSTIEIKGEVTSRIKPILTPGAIVTDPRTATHMMVTEFGIATLKGRSTWERAEELIKIAHPDFQDELVKEAQKMNIWRKSNKIG</sequence>
<protein>
    <recommendedName>
        <fullName evidence="2 5">Probable butyrate:acetyl-CoA coenzyme A-transferase</fullName>
        <shortName evidence="2 5">Butyrate CoA-transferase</shortName>
        <ecNumber evidence="2 5">2.8.3.-</ecNumber>
    </recommendedName>
</protein>
<reference key="1">
    <citation type="journal article" date="2010" name="Environ. Microbiol.">
        <title>The genome of Syntrophomonas wolfei: new insights into syntrophic metabolism and biohydrogen production.</title>
        <authorList>
            <person name="Sieber J.R."/>
            <person name="Sims D.R."/>
            <person name="Han C."/>
            <person name="Kim E."/>
            <person name="Lykidis A."/>
            <person name="Lapidus A.L."/>
            <person name="McDonnald E."/>
            <person name="Rohlin L."/>
            <person name="Culley D.E."/>
            <person name="Gunsalus R."/>
            <person name="McInerney M.J."/>
        </authorList>
    </citation>
    <scope>NUCLEOTIDE SEQUENCE [LARGE SCALE GENOMIC DNA]</scope>
    <source>
        <strain>DSM 2245B / Goettingen</strain>
    </source>
</reference>
<reference key="2">
    <citation type="journal article" date="2013" name="PLoS ONE">
        <title>A proteomic view at the biochemistry of syntrophic butyrate oxidation in Syntrophomonas wolfei.</title>
        <authorList>
            <person name="Schmidt A."/>
            <person name="Mueller N."/>
            <person name="Schink B."/>
            <person name="Schleheck D."/>
        </authorList>
    </citation>
    <scope>IDENTIFICATION BY MASS SPECTROMETRY</scope>
    <scope>INDUCTION</scope>
    <scope>SUBCELLULAR LOCATION</scope>
    <scope>FUNCTION</scope>
    <scope>PATHWAY</scope>
</reference>
<name>BCT_SYNWW</name>
<feature type="chain" id="PRO_0000442210" description="Probable butyrate:acetyl-CoA coenzyme A-transferase">
    <location>
        <begin position="1"/>
        <end position="447"/>
    </location>
</feature>
<feature type="active site" description="5-glutamyl coenzyme A thioester intermediate" evidence="1 2">
    <location>
        <position position="245"/>
    </location>
</feature>
<feature type="binding site" evidence="1 2">
    <location>
        <begin position="220"/>
        <end position="224"/>
    </location>
    <ligand>
        <name>CoA</name>
        <dbReference type="ChEBI" id="CHEBI:57287"/>
    </ligand>
</feature>
<feature type="binding site" evidence="1 2">
    <location>
        <position position="320"/>
    </location>
    <ligand>
        <name>CoA</name>
        <dbReference type="ChEBI" id="CHEBI:57287"/>
    </ligand>
</feature>
<feature type="binding site" evidence="1 2">
    <location>
        <position position="343"/>
    </location>
    <ligand>
        <name>CoA</name>
        <dbReference type="ChEBI" id="CHEBI:57287"/>
    </ligand>
</feature>
<comment type="function">
    <text evidence="2 5">Coenzyme A-transferase that converts butyrate to butyryl-CoA. Involved in the syntrophic growth of S.wolfei on butyrate in cooperation with methanogens or an appropriate hydrogen-scavenging bacterium, as part of the butyrate oxidation pathway.</text>
</comment>
<comment type="catalytic activity">
    <reaction evidence="2 5">
        <text>butanoate + acetyl-CoA = butanoyl-CoA + acetate</text>
        <dbReference type="Rhea" id="RHEA:30071"/>
        <dbReference type="ChEBI" id="CHEBI:17968"/>
        <dbReference type="ChEBI" id="CHEBI:30089"/>
        <dbReference type="ChEBI" id="CHEBI:57288"/>
        <dbReference type="ChEBI" id="CHEBI:57371"/>
    </reaction>
    <physiologicalReaction direction="left-to-right" evidence="5">
        <dbReference type="Rhea" id="RHEA:30072"/>
    </physiologicalReaction>
</comment>
<comment type="pathway">
    <text evidence="2 5">Lipid metabolism; butanoate metabolism.</text>
</comment>
<comment type="subcellular location">
    <subcellularLocation>
        <location evidence="2 3">Cytoplasm</location>
    </subcellularLocation>
</comment>
<comment type="induction">
    <text evidence="3">Expressed during syntrophic growth with butyrate (at protein level). Seems to be constitutively expressed.</text>
</comment>
<comment type="similarity">
    <text evidence="2 4">Belongs to the acetyl-CoA hydrolase/transferase family.</text>
</comment>
<keyword id="KW-0963">Cytoplasm</keyword>
<keyword id="KW-0276">Fatty acid metabolism</keyword>
<keyword id="KW-0443">Lipid metabolism</keyword>
<keyword id="KW-1185">Reference proteome</keyword>
<keyword id="KW-0808">Transferase</keyword>
<gene>
    <name type="ordered locus">Swol_1932</name>
</gene>
<accession>Q0AVM5</accession>
<organism>
    <name type="scientific">Syntrophomonas wolfei subsp. wolfei (strain DSM 2245B / Goettingen)</name>
    <dbReference type="NCBI Taxonomy" id="335541"/>
    <lineage>
        <taxon>Bacteria</taxon>
        <taxon>Bacillati</taxon>
        <taxon>Bacillota</taxon>
        <taxon>Clostridia</taxon>
        <taxon>Eubacteriales</taxon>
        <taxon>Syntrophomonadaceae</taxon>
        <taxon>Syntrophomonas</taxon>
    </lineage>
</organism>
<evidence type="ECO:0000250" key="1">
    <source>
        <dbReference type="UniProtKB" id="B3EY95"/>
    </source>
</evidence>
<evidence type="ECO:0000255" key="2">
    <source>
        <dbReference type="HAMAP-Rule" id="MF_03228"/>
    </source>
</evidence>
<evidence type="ECO:0000269" key="3">
    <source>
    </source>
</evidence>
<evidence type="ECO:0000305" key="4"/>
<evidence type="ECO:0000305" key="5">
    <source>
    </source>
</evidence>